<protein>
    <recommendedName>
        <fullName evidence="1">Chorismate synthase</fullName>
        <shortName evidence="1">CS</shortName>
        <ecNumber evidence="1">4.2.3.5</ecNumber>
    </recommendedName>
    <alternativeName>
        <fullName evidence="1">5-enolpyruvylshikimate-3-phosphate phospholyase</fullName>
    </alternativeName>
</protein>
<keyword id="KW-0028">Amino-acid biosynthesis</keyword>
<keyword id="KW-0057">Aromatic amino acid biosynthesis</keyword>
<keyword id="KW-0274">FAD</keyword>
<keyword id="KW-0285">Flavoprotein</keyword>
<keyword id="KW-0288">FMN</keyword>
<keyword id="KW-0456">Lyase</keyword>
<keyword id="KW-0521">NADP</keyword>
<sequence length="361" mass="38504">MSFNTFGHMFRVTTFGESHGVAIGCVVDGCPPLIPLTEADIQGDLDRRRPGQSRFTTQRQEADQVKILSGVMAHPVSGEQVTTGTPIALQIENTDQRSKDYSEIKDKYRPGHADFTYEAKYGIRDYRGGGRSSARETASRVAAGAVARKVVPGMTIRAALVQMGPHAIDRAKWDWAEISNNPFFCPDKDKAAFFEEYLDGIRKTGSSIGAVIEVIAEGVPAGLGAPIYGKLDSDLAAALMSINAVKGVEIGDGFATAALSGEENADEIRSSNHGPVFLSNHAGGILGGISTGQPVVARFAVKPTSSILSPRKTIDREGHDTDILTKGRHDPCVGIRAVPVAEAMVACVLADHLIRHRGQVG</sequence>
<organism>
    <name type="scientific">Rhodopseudomonas palustris (strain BisA53)</name>
    <dbReference type="NCBI Taxonomy" id="316055"/>
    <lineage>
        <taxon>Bacteria</taxon>
        <taxon>Pseudomonadati</taxon>
        <taxon>Pseudomonadota</taxon>
        <taxon>Alphaproteobacteria</taxon>
        <taxon>Hyphomicrobiales</taxon>
        <taxon>Nitrobacteraceae</taxon>
        <taxon>Rhodopseudomonas</taxon>
    </lineage>
</organism>
<name>AROC_RHOP5</name>
<gene>
    <name evidence="1" type="primary">aroC</name>
    <name type="ordered locus">RPE_4589</name>
</gene>
<evidence type="ECO:0000255" key="1">
    <source>
        <dbReference type="HAMAP-Rule" id="MF_00300"/>
    </source>
</evidence>
<accession>Q07HS5</accession>
<feature type="chain" id="PRO_1000022538" description="Chorismate synthase">
    <location>
        <begin position="1"/>
        <end position="361"/>
    </location>
</feature>
<feature type="binding site" evidence="1">
    <location>
        <position position="48"/>
    </location>
    <ligand>
        <name>NADP(+)</name>
        <dbReference type="ChEBI" id="CHEBI:58349"/>
    </ligand>
</feature>
<feature type="binding site" evidence="1">
    <location>
        <position position="54"/>
    </location>
    <ligand>
        <name>NADP(+)</name>
        <dbReference type="ChEBI" id="CHEBI:58349"/>
    </ligand>
</feature>
<feature type="binding site" evidence="1">
    <location>
        <begin position="131"/>
        <end position="133"/>
    </location>
    <ligand>
        <name>FMN</name>
        <dbReference type="ChEBI" id="CHEBI:58210"/>
    </ligand>
</feature>
<feature type="binding site" evidence="1">
    <location>
        <begin position="243"/>
        <end position="244"/>
    </location>
    <ligand>
        <name>FMN</name>
        <dbReference type="ChEBI" id="CHEBI:58210"/>
    </ligand>
</feature>
<feature type="binding site" evidence="1">
    <location>
        <position position="287"/>
    </location>
    <ligand>
        <name>FMN</name>
        <dbReference type="ChEBI" id="CHEBI:58210"/>
    </ligand>
</feature>
<feature type="binding site" evidence="1">
    <location>
        <begin position="302"/>
        <end position="306"/>
    </location>
    <ligand>
        <name>FMN</name>
        <dbReference type="ChEBI" id="CHEBI:58210"/>
    </ligand>
</feature>
<feature type="binding site" evidence="1">
    <location>
        <position position="328"/>
    </location>
    <ligand>
        <name>FMN</name>
        <dbReference type="ChEBI" id="CHEBI:58210"/>
    </ligand>
</feature>
<proteinExistence type="inferred from homology"/>
<dbReference type="EC" id="4.2.3.5" evidence="1"/>
<dbReference type="EMBL" id="CP000463">
    <property type="protein sequence ID" value="ABJ08509.1"/>
    <property type="molecule type" value="Genomic_DNA"/>
</dbReference>
<dbReference type="SMR" id="Q07HS5"/>
<dbReference type="STRING" id="316055.RPE_4589"/>
<dbReference type="KEGG" id="rpe:RPE_4589"/>
<dbReference type="eggNOG" id="COG0082">
    <property type="taxonomic scope" value="Bacteria"/>
</dbReference>
<dbReference type="HOGENOM" id="CLU_034547_0_0_5"/>
<dbReference type="OrthoDB" id="9771806at2"/>
<dbReference type="UniPathway" id="UPA00053">
    <property type="reaction ID" value="UER00090"/>
</dbReference>
<dbReference type="GO" id="GO:0005829">
    <property type="term" value="C:cytosol"/>
    <property type="evidence" value="ECO:0007669"/>
    <property type="project" value="TreeGrafter"/>
</dbReference>
<dbReference type="GO" id="GO:0004107">
    <property type="term" value="F:chorismate synthase activity"/>
    <property type="evidence" value="ECO:0007669"/>
    <property type="project" value="UniProtKB-UniRule"/>
</dbReference>
<dbReference type="GO" id="GO:0010181">
    <property type="term" value="F:FMN binding"/>
    <property type="evidence" value="ECO:0007669"/>
    <property type="project" value="TreeGrafter"/>
</dbReference>
<dbReference type="GO" id="GO:0008652">
    <property type="term" value="P:amino acid biosynthetic process"/>
    <property type="evidence" value="ECO:0007669"/>
    <property type="project" value="UniProtKB-KW"/>
</dbReference>
<dbReference type="GO" id="GO:0009073">
    <property type="term" value="P:aromatic amino acid family biosynthetic process"/>
    <property type="evidence" value="ECO:0007669"/>
    <property type="project" value="UniProtKB-KW"/>
</dbReference>
<dbReference type="GO" id="GO:0009423">
    <property type="term" value="P:chorismate biosynthetic process"/>
    <property type="evidence" value="ECO:0007669"/>
    <property type="project" value="UniProtKB-UniRule"/>
</dbReference>
<dbReference type="CDD" id="cd07304">
    <property type="entry name" value="Chorismate_synthase"/>
    <property type="match status" value="1"/>
</dbReference>
<dbReference type="Gene3D" id="3.60.150.10">
    <property type="entry name" value="Chorismate synthase AroC"/>
    <property type="match status" value="1"/>
</dbReference>
<dbReference type="HAMAP" id="MF_00300">
    <property type="entry name" value="Chorismate_synth"/>
    <property type="match status" value="1"/>
</dbReference>
<dbReference type="InterPro" id="IPR000453">
    <property type="entry name" value="Chorismate_synth"/>
</dbReference>
<dbReference type="InterPro" id="IPR035904">
    <property type="entry name" value="Chorismate_synth_AroC_sf"/>
</dbReference>
<dbReference type="InterPro" id="IPR020541">
    <property type="entry name" value="Chorismate_synthase_CS"/>
</dbReference>
<dbReference type="NCBIfam" id="TIGR00033">
    <property type="entry name" value="aroC"/>
    <property type="match status" value="1"/>
</dbReference>
<dbReference type="NCBIfam" id="NF003793">
    <property type="entry name" value="PRK05382.1"/>
    <property type="match status" value="1"/>
</dbReference>
<dbReference type="PANTHER" id="PTHR21085">
    <property type="entry name" value="CHORISMATE SYNTHASE"/>
    <property type="match status" value="1"/>
</dbReference>
<dbReference type="PANTHER" id="PTHR21085:SF0">
    <property type="entry name" value="CHORISMATE SYNTHASE"/>
    <property type="match status" value="1"/>
</dbReference>
<dbReference type="Pfam" id="PF01264">
    <property type="entry name" value="Chorismate_synt"/>
    <property type="match status" value="1"/>
</dbReference>
<dbReference type="PIRSF" id="PIRSF001456">
    <property type="entry name" value="Chorismate_synth"/>
    <property type="match status" value="1"/>
</dbReference>
<dbReference type="SUPFAM" id="SSF103263">
    <property type="entry name" value="Chorismate synthase, AroC"/>
    <property type="match status" value="1"/>
</dbReference>
<dbReference type="PROSITE" id="PS00787">
    <property type="entry name" value="CHORISMATE_SYNTHASE_1"/>
    <property type="match status" value="1"/>
</dbReference>
<dbReference type="PROSITE" id="PS00788">
    <property type="entry name" value="CHORISMATE_SYNTHASE_2"/>
    <property type="match status" value="1"/>
</dbReference>
<dbReference type="PROSITE" id="PS00789">
    <property type="entry name" value="CHORISMATE_SYNTHASE_3"/>
    <property type="match status" value="1"/>
</dbReference>
<reference key="1">
    <citation type="submission" date="2006-09" db="EMBL/GenBank/DDBJ databases">
        <title>Complete sequence of Rhodopseudomonas palustris BisA53.</title>
        <authorList>
            <consortium name="US DOE Joint Genome Institute"/>
            <person name="Copeland A."/>
            <person name="Lucas S."/>
            <person name="Lapidus A."/>
            <person name="Barry K."/>
            <person name="Detter J.C."/>
            <person name="Glavina del Rio T."/>
            <person name="Hammon N."/>
            <person name="Israni S."/>
            <person name="Dalin E."/>
            <person name="Tice H."/>
            <person name="Pitluck S."/>
            <person name="Chain P."/>
            <person name="Malfatti S."/>
            <person name="Shin M."/>
            <person name="Vergez L."/>
            <person name="Schmutz J."/>
            <person name="Larimer F."/>
            <person name="Land M."/>
            <person name="Hauser L."/>
            <person name="Pelletier D.A."/>
            <person name="Kyrpides N."/>
            <person name="Kim E."/>
            <person name="Harwood C.S."/>
            <person name="Oda Y."/>
            <person name="Richardson P."/>
        </authorList>
    </citation>
    <scope>NUCLEOTIDE SEQUENCE [LARGE SCALE GENOMIC DNA]</scope>
    <source>
        <strain>BisA53</strain>
    </source>
</reference>
<comment type="function">
    <text evidence="1">Catalyzes the anti-1,4-elimination of the C-3 phosphate and the C-6 proR hydrogen from 5-enolpyruvylshikimate-3-phosphate (EPSP) to yield chorismate, which is the branch point compound that serves as the starting substrate for the three terminal pathways of aromatic amino acid biosynthesis. This reaction introduces a second double bond into the aromatic ring system.</text>
</comment>
<comment type="catalytic activity">
    <reaction evidence="1">
        <text>5-O-(1-carboxyvinyl)-3-phosphoshikimate = chorismate + phosphate</text>
        <dbReference type="Rhea" id="RHEA:21020"/>
        <dbReference type="ChEBI" id="CHEBI:29748"/>
        <dbReference type="ChEBI" id="CHEBI:43474"/>
        <dbReference type="ChEBI" id="CHEBI:57701"/>
        <dbReference type="EC" id="4.2.3.5"/>
    </reaction>
</comment>
<comment type="cofactor">
    <cofactor evidence="1">
        <name>FMNH2</name>
        <dbReference type="ChEBI" id="CHEBI:57618"/>
    </cofactor>
    <text evidence="1">Reduced FMN (FMNH(2)).</text>
</comment>
<comment type="pathway">
    <text evidence="1">Metabolic intermediate biosynthesis; chorismate biosynthesis; chorismate from D-erythrose 4-phosphate and phosphoenolpyruvate: step 7/7.</text>
</comment>
<comment type="subunit">
    <text evidence="1">Homotetramer.</text>
</comment>
<comment type="similarity">
    <text evidence="1">Belongs to the chorismate synthase family.</text>
</comment>